<name>HBD_DEIRA</name>
<keyword id="KW-0276">Fatty acid metabolism</keyword>
<keyword id="KW-0443">Lipid metabolism</keyword>
<keyword id="KW-0521">NADP</keyword>
<keyword id="KW-0560">Oxidoreductase</keyword>
<keyword id="KW-1185">Reference proteome</keyword>
<sequence>MKFGVIGAGQMGGGIAQVAAQSGFDVVVHDQKQEFLDRGKGVIEKSLGKLHEKGKLTDAPETVLGRIHFTTDLQDFADCDLVVEAIVENQQIKNDLFKQLGQIVKPEGILASNTSSIPITALATASGRPAQFIGMHFMNPVPLMQLVEVIRGYQTSDETARIVTETAEKLGKTPLSCNDFPGFVSNRILMPMLNEAIQCVMEGVAEPEAIDGIMKLGMNHPMGPLTLADFIGLDTCLAIMEVLHQGLGDDKYRPSPLLRKMVQAGLLGRKSGEGFYKY</sequence>
<comment type="catalytic activity">
    <reaction>
        <text>(3S)-3-hydroxybutanoyl-CoA + NADP(+) = acetoacetyl-CoA + NADPH + H(+)</text>
        <dbReference type="Rhea" id="RHEA:16197"/>
        <dbReference type="ChEBI" id="CHEBI:15378"/>
        <dbReference type="ChEBI" id="CHEBI:57286"/>
        <dbReference type="ChEBI" id="CHEBI:57316"/>
        <dbReference type="ChEBI" id="CHEBI:57783"/>
        <dbReference type="ChEBI" id="CHEBI:58349"/>
        <dbReference type="EC" id="1.1.1.157"/>
    </reaction>
</comment>
<comment type="pathway">
    <text>Lipid metabolism; butanoate metabolism.</text>
</comment>
<comment type="similarity">
    <text evidence="2">Belongs to the 3-hydroxyacyl-CoA dehydrogenase family.</text>
</comment>
<reference key="1">
    <citation type="journal article" date="1999" name="Science">
        <title>Genome sequence of the radioresistant bacterium Deinococcus radiodurans R1.</title>
        <authorList>
            <person name="White O."/>
            <person name="Eisen J.A."/>
            <person name="Heidelberg J.F."/>
            <person name="Hickey E.K."/>
            <person name="Peterson J.D."/>
            <person name="Dodson R.J."/>
            <person name="Haft D.H."/>
            <person name="Gwinn M.L."/>
            <person name="Nelson W.C."/>
            <person name="Richardson D.L."/>
            <person name="Moffat K.S."/>
            <person name="Qin H."/>
            <person name="Jiang L."/>
            <person name="Pamphile W."/>
            <person name="Crosby M."/>
            <person name="Shen M."/>
            <person name="Vamathevan J.J."/>
            <person name="Lam P."/>
            <person name="McDonald L.A."/>
            <person name="Utterback T.R."/>
            <person name="Zalewski C."/>
            <person name="Makarova K.S."/>
            <person name="Aravind L."/>
            <person name="Daly M.J."/>
            <person name="Minton K.W."/>
            <person name="Fleischmann R.D."/>
            <person name="Ketchum K.A."/>
            <person name="Nelson K.E."/>
            <person name="Salzberg S.L."/>
            <person name="Smith H.O."/>
            <person name="Venter J.C."/>
            <person name="Fraser C.M."/>
        </authorList>
    </citation>
    <scope>NUCLEOTIDE SEQUENCE [LARGE SCALE GENOMIC DNA]</scope>
    <source>
        <strain>ATCC 13939 / DSM 20539 / JCM 16871 / CCUG 27074 / LMG 4051 / NBRC 15346 / NCIMB 9279 / VKM B-1422 / R1</strain>
    </source>
</reference>
<dbReference type="EC" id="1.1.1.157"/>
<dbReference type="EMBL" id="AE000513">
    <property type="protein sequence ID" value="AAF10638.1"/>
    <property type="molecule type" value="Genomic_DNA"/>
</dbReference>
<dbReference type="PIR" id="B75442">
    <property type="entry name" value="B75442"/>
</dbReference>
<dbReference type="RefSeq" id="NP_294792.1">
    <property type="nucleotide sequence ID" value="NC_001263.1"/>
</dbReference>
<dbReference type="RefSeq" id="WP_010887711.1">
    <property type="nucleotide sequence ID" value="NC_001263.1"/>
</dbReference>
<dbReference type="SMR" id="Q9RVG1"/>
<dbReference type="FunCoup" id="Q9RVG1">
    <property type="interactions" value="249"/>
</dbReference>
<dbReference type="STRING" id="243230.DR_1068"/>
<dbReference type="PaxDb" id="243230-DR_1068"/>
<dbReference type="EnsemblBacteria" id="AAF10638">
    <property type="protein sequence ID" value="AAF10638"/>
    <property type="gene ID" value="DR_1068"/>
</dbReference>
<dbReference type="GeneID" id="69517313"/>
<dbReference type="KEGG" id="dra:DR_1068"/>
<dbReference type="PATRIC" id="fig|243230.17.peg.1264"/>
<dbReference type="eggNOG" id="COG1250">
    <property type="taxonomic scope" value="Bacteria"/>
</dbReference>
<dbReference type="HOGENOM" id="CLU_009834_2_0_0"/>
<dbReference type="InParanoid" id="Q9RVG1"/>
<dbReference type="OrthoDB" id="9771883at2"/>
<dbReference type="UniPathway" id="UPA00863"/>
<dbReference type="Proteomes" id="UP000002524">
    <property type="component" value="Chromosome 1"/>
</dbReference>
<dbReference type="GO" id="GO:0008691">
    <property type="term" value="F:3-hydroxybutyryl-CoA dehydrogenase activity"/>
    <property type="evidence" value="ECO:0000318"/>
    <property type="project" value="GO_Central"/>
</dbReference>
<dbReference type="GO" id="GO:0070403">
    <property type="term" value="F:NAD+ binding"/>
    <property type="evidence" value="ECO:0007669"/>
    <property type="project" value="InterPro"/>
</dbReference>
<dbReference type="GO" id="GO:0019605">
    <property type="term" value="P:butyrate metabolic process"/>
    <property type="evidence" value="ECO:0007669"/>
    <property type="project" value="UniProtKB-UniPathway"/>
</dbReference>
<dbReference type="GO" id="GO:0006635">
    <property type="term" value="P:fatty acid beta-oxidation"/>
    <property type="evidence" value="ECO:0000318"/>
    <property type="project" value="GO_Central"/>
</dbReference>
<dbReference type="FunFam" id="3.40.50.720:FF:000009">
    <property type="entry name" value="Fatty oxidation complex, alpha subunit"/>
    <property type="match status" value="1"/>
</dbReference>
<dbReference type="Gene3D" id="1.10.1040.10">
    <property type="entry name" value="N-(1-d-carboxylethyl)-l-norvaline Dehydrogenase, domain 2"/>
    <property type="match status" value="1"/>
</dbReference>
<dbReference type="Gene3D" id="3.40.50.720">
    <property type="entry name" value="NAD(P)-binding Rossmann-like Domain"/>
    <property type="match status" value="1"/>
</dbReference>
<dbReference type="InterPro" id="IPR022694">
    <property type="entry name" value="3-OHacyl-CoA_DH"/>
</dbReference>
<dbReference type="InterPro" id="IPR006180">
    <property type="entry name" value="3-OHacyl-CoA_DH_CS"/>
</dbReference>
<dbReference type="InterPro" id="IPR006176">
    <property type="entry name" value="3-OHacyl-CoA_DH_NAD-bd"/>
</dbReference>
<dbReference type="InterPro" id="IPR006108">
    <property type="entry name" value="3HC_DH_C"/>
</dbReference>
<dbReference type="InterPro" id="IPR008927">
    <property type="entry name" value="6-PGluconate_DH-like_C_sf"/>
</dbReference>
<dbReference type="InterPro" id="IPR013328">
    <property type="entry name" value="6PGD_dom2"/>
</dbReference>
<dbReference type="InterPro" id="IPR036291">
    <property type="entry name" value="NAD(P)-bd_dom_sf"/>
</dbReference>
<dbReference type="NCBIfam" id="NF004474">
    <property type="entry name" value="PRK05808.1"/>
    <property type="match status" value="1"/>
</dbReference>
<dbReference type="NCBIfam" id="NF005875">
    <property type="entry name" value="PRK07819.1"/>
    <property type="match status" value="1"/>
</dbReference>
<dbReference type="PANTHER" id="PTHR48075">
    <property type="entry name" value="3-HYDROXYACYL-COA DEHYDROGENASE FAMILY PROTEIN"/>
    <property type="match status" value="1"/>
</dbReference>
<dbReference type="PANTHER" id="PTHR48075:SF5">
    <property type="entry name" value="3-HYDROXYBUTYRYL-COA DEHYDROGENASE"/>
    <property type="match status" value="1"/>
</dbReference>
<dbReference type="Pfam" id="PF00725">
    <property type="entry name" value="3HCDH"/>
    <property type="match status" value="1"/>
</dbReference>
<dbReference type="Pfam" id="PF02737">
    <property type="entry name" value="3HCDH_N"/>
    <property type="match status" value="1"/>
</dbReference>
<dbReference type="PIRSF" id="PIRSF000105">
    <property type="entry name" value="HCDH"/>
    <property type="match status" value="1"/>
</dbReference>
<dbReference type="SUPFAM" id="SSF48179">
    <property type="entry name" value="6-phosphogluconate dehydrogenase C-terminal domain-like"/>
    <property type="match status" value="1"/>
</dbReference>
<dbReference type="SUPFAM" id="SSF51735">
    <property type="entry name" value="NAD(P)-binding Rossmann-fold domains"/>
    <property type="match status" value="1"/>
</dbReference>
<dbReference type="PROSITE" id="PS00067">
    <property type="entry name" value="3HCDH"/>
    <property type="match status" value="1"/>
</dbReference>
<evidence type="ECO:0000250" key="1"/>
<evidence type="ECO:0000305" key="2"/>
<proteinExistence type="inferred from homology"/>
<accession>Q9RVG1</accession>
<organism>
    <name type="scientific">Deinococcus radiodurans (strain ATCC 13939 / DSM 20539 / JCM 16871 / CCUG 27074 / LMG 4051 / NBRC 15346 / NCIMB 9279 / VKM B-1422 / R1)</name>
    <dbReference type="NCBI Taxonomy" id="243230"/>
    <lineage>
        <taxon>Bacteria</taxon>
        <taxon>Thermotogati</taxon>
        <taxon>Deinococcota</taxon>
        <taxon>Deinococci</taxon>
        <taxon>Deinococcales</taxon>
        <taxon>Deinococcaceae</taxon>
        <taxon>Deinococcus</taxon>
    </lineage>
</organism>
<gene>
    <name type="primary">hbd</name>
    <name type="ordered locus">DR_1068</name>
</gene>
<feature type="chain" id="PRO_0000109261" description="Probable 3-hydroxybutyryl-CoA dehydrogenase">
    <location>
        <begin position="1"/>
        <end position="278"/>
    </location>
</feature>
<feature type="site" description="Important for catalytic activity" evidence="1">
    <location>
        <position position="136"/>
    </location>
</feature>
<protein>
    <recommendedName>
        <fullName>Probable 3-hydroxybutyryl-CoA dehydrogenase</fullName>
        <ecNumber>1.1.1.157</ecNumber>
    </recommendedName>
    <alternativeName>
        <fullName>Beta-hydroxybutyryl-CoA dehydrogenase</fullName>
        <shortName>BHBD</shortName>
    </alternativeName>
</protein>